<feature type="chain" id="PRO_1000116953" description="Phosphoadenosine 5'-phosphosulfate reductase">
    <location>
        <begin position="1"/>
        <end position="244"/>
    </location>
</feature>
<feature type="active site" description="Nucleophile; cysteine thiosulfonate intermediate" evidence="1">
    <location>
        <position position="239"/>
    </location>
</feature>
<gene>
    <name evidence="1" type="primary">cysH</name>
    <name type="ordered locus">EFER_0300</name>
</gene>
<protein>
    <recommendedName>
        <fullName evidence="1">Phosphoadenosine 5'-phosphosulfate reductase</fullName>
        <shortName evidence="1">PAPS reductase</shortName>
        <ecNumber evidence="1">1.8.4.8</ecNumber>
    </recommendedName>
    <alternativeName>
        <fullName evidence="1">3'-phosphoadenylylsulfate reductase</fullName>
    </alternativeName>
    <alternativeName>
        <fullName evidence="1">PAPS reductase, thioredoxin dependent</fullName>
    </alternativeName>
    <alternativeName>
        <fullName evidence="1">PAPS sulfotransferase</fullName>
    </alternativeName>
    <alternativeName>
        <fullName evidence="1">PAdoPS reductase</fullName>
    </alternativeName>
</protein>
<dbReference type="EC" id="1.8.4.8" evidence="1"/>
<dbReference type="EMBL" id="CU928158">
    <property type="protein sequence ID" value="CAQ87866.1"/>
    <property type="molecule type" value="Genomic_DNA"/>
</dbReference>
<dbReference type="RefSeq" id="WP_000039850.1">
    <property type="nucleotide sequence ID" value="NC_011740.1"/>
</dbReference>
<dbReference type="SMR" id="B7LWP0"/>
<dbReference type="GeneID" id="75058622"/>
<dbReference type="KEGG" id="efe:EFER_0300"/>
<dbReference type="HOGENOM" id="CLU_044089_3_0_6"/>
<dbReference type="OrthoDB" id="9794018at2"/>
<dbReference type="UniPathway" id="UPA00140">
    <property type="reaction ID" value="UER00206"/>
</dbReference>
<dbReference type="Proteomes" id="UP000000745">
    <property type="component" value="Chromosome"/>
</dbReference>
<dbReference type="GO" id="GO:0005737">
    <property type="term" value="C:cytoplasm"/>
    <property type="evidence" value="ECO:0007669"/>
    <property type="project" value="UniProtKB-SubCell"/>
</dbReference>
<dbReference type="GO" id="GO:0004604">
    <property type="term" value="F:phosphoadenylyl-sulfate reductase (thioredoxin) activity"/>
    <property type="evidence" value="ECO:0007669"/>
    <property type="project" value="UniProtKB-UniRule"/>
</dbReference>
<dbReference type="GO" id="GO:0070814">
    <property type="term" value="P:hydrogen sulfide biosynthetic process"/>
    <property type="evidence" value="ECO:0007669"/>
    <property type="project" value="UniProtKB-UniRule"/>
</dbReference>
<dbReference type="GO" id="GO:0019379">
    <property type="term" value="P:sulfate assimilation, phosphoadenylyl sulfate reduction by phosphoadenylyl-sulfate reductase (thioredoxin)"/>
    <property type="evidence" value="ECO:0007669"/>
    <property type="project" value="UniProtKB-UniRule"/>
</dbReference>
<dbReference type="CDD" id="cd23945">
    <property type="entry name" value="PAPS_reductase"/>
    <property type="match status" value="1"/>
</dbReference>
<dbReference type="FunFam" id="3.40.50.620:FF:000043">
    <property type="entry name" value="Phosphoadenosine phosphosulfate reductase"/>
    <property type="match status" value="1"/>
</dbReference>
<dbReference type="Gene3D" id="3.40.50.620">
    <property type="entry name" value="HUPs"/>
    <property type="match status" value="1"/>
</dbReference>
<dbReference type="HAMAP" id="MF_00063">
    <property type="entry name" value="CysH"/>
    <property type="match status" value="1"/>
</dbReference>
<dbReference type="InterPro" id="IPR004511">
    <property type="entry name" value="PAPS/APS_Rdtase"/>
</dbReference>
<dbReference type="InterPro" id="IPR002500">
    <property type="entry name" value="PAPS_reduct_dom"/>
</dbReference>
<dbReference type="InterPro" id="IPR011800">
    <property type="entry name" value="PAPS_reductase_CysH"/>
</dbReference>
<dbReference type="InterPro" id="IPR014729">
    <property type="entry name" value="Rossmann-like_a/b/a_fold"/>
</dbReference>
<dbReference type="NCBIfam" id="TIGR00434">
    <property type="entry name" value="cysH"/>
    <property type="match status" value="1"/>
</dbReference>
<dbReference type="NCBIfam" id="TIGR02057">
    <property type="entry name" value="PAPS_reductase"/>
    <property type="match status" value="1"/>
</dbReference>
<dbReference type="NCBIfam" id="NF002537">
    <property type="entry name" value="PRK02090.1"/>
    <property type="match status" value="1"/>
</dbReference>
<dbReference type="PANTHER" id="PTHR46509">
    <property type="entry name" value="PHOSPHOADENOSINE PHOSPHOSULFATE REDUCTASE"/>
    <property type="match status" value="1"/>
</dbReference>
<dbReference type="PANTHER" id="PTHR46509:SF1">
    <property type="entry name" value="PHOSPHOADENOSINE PHOSPHOSULFATE REDUCTASE"/>
    <property type="match status" value="1"/>
</dbReference>
<dbReference type="Pfam" id="PF01507">
    <property type="entry name" value="PAPS_reduct"/>
    <property type="match status" value="1"/>
</dbReference>
<dbReference type="PIRSF" id="PIRSF000857">
    <property type="entry name" value="PAPS_reductase"/>
    <property type="match status" value="1"/>
</dbReference>
<dbReference type="SUPFAM" id="SSF52402">
    <property type="entry name" value="Adenine nucleotide alpha hydrolases-like"/>
    <property type="match status" value="1"/>
</dbReference>
<comment type="function">
    <text evidence="1">Catalyzes the formation of sulfite from phosphoadenosine 5'-phosphosulfate (PAPS) using thioredoxin as an electron donor.</text>
</comment>
<comment type="catalytic activity">
    <reaction evidence="1">
        <text>[thioredoxin]-disulfide + sulfite + adenosine 3',5'-bisphosphate + 2 H(+) = [thioredoxin]-dithiol + 3'-phosphoadenylyl sulfate</text>
        <dbReference type="Rhea" id="RHEA:11724"/>
        <dbReference type="Rhea" id="RHEA-COMP:10698"/>
        <dbReference type="Rhea" id="RHEA-COMP:10700"/>
        <dbReference type="ChEBI" id="CHEBI:15378"/>
        <dbReference type="ChEBI" id="CHEBI:17359"/>
        <dbReference type="ChEBI" id="CHEBI:29950"/>
        <dbReference type="ChEBI" id="CHEBI:50058"/>
        <dbReference type="ChEBI" id="CHEBI:58339"/>
        <dbReference type="ChEBI" id="CHEBI:58343"/>
        <dbReference type="EC" id="1.8.4.8"/>
    </reaction>
</comment>
<comment type="pathway">
    <text evidence="1">Sulfur metabolism; hydrogen sulfide biosynthesis; sulfite from sulfate: step 3/3.</text>
</comment>
<comment type="subcellular location">
    <subcellularLocation>
        <location evidence="1">Cytoplasm</location>
    </subcellularLocation>
</comment>
<comment type="similarity">
    <text evidence="1">Belongs to the PAPS reductase family. CysH subfamily.</text>
</comment>
<proteinExistence type="inferred from homology"/>
<organism>
    <name type="scientific">Escherichia fergusonii (strain ATCC 35469 / DSM 13698 / CCUG 18766 / IAM 14443 / JCM 21226 / LMG 7866 / NBRC 102419 / NCTC 12128 / CDC 0568-73)</name>
    <dbReference type="NCBI Taxonomy" id="585054"/>
    <lineage>
        <taxon>Bacteria</taxon>
        <taxon>Pseudomonadati</taxon>
        <taxon>Pseudomonadota</taxon>
        <taxon>Gammaproteobacteria</taxon>
        <taxon>Enterobacterales</taxon>
        <taxon>Enterobacteriaceae</taxon>
        <taxon>Escherichia</taxon>
    </lineage>
</organism>
<reference key="1">
    <citation type="journal article" date="2009" name="PLoS Genet.">
        <title>Organised genome dynamics in the Escherichia coli species results in highly diverse adaptive paths.</title>
        <authorList>
            <person name="Touchon M."/>
            <person name="Hoede C."/>
            <person name="Tenaillon O."/>
            <person name="Barbe V."/>
            <person name="Baeriswyl S."/>
            <person name="Bidet P."/>
            <person name="Bingen E."/>
            <person name="Bonacorsi S."/>
            <person name="Bouchier C."/>
            <person name="Bouvet O."/>
            <person name="Calteau A."/>
            <person name="Chiapello H."/>
            <person name="Clermont O."/>
            <person name="Cruveiller S."/>
            <person name="Danchin A."/>
            <person name="Diard M."/>
            <person name="Dossat C."/>
            <person name="Karoui M.E."/>
            <person name="Frapy E."/>
            <person name="Garry L."/>
            <person name="Ghigo J.M."/>
            <person name="Gilles A.M."/>
            <person name="Johnson J."/>
            <person name="Le Bouguenec C."/>
            <person name="Lescat M."/>
            <person name="Mangenot S."/>
            <person name="Martinez-Jehanne V."/>
            <person name="Matic I."/>
            <person name="Nassif X."/>
            <person name="Oztas S."/>
            <person name="Petit M.A."/>
            <person name="Pichon C."/>
            <person name="Rouy Z."/>
            <person name="Ruf C.S."/>
            <person name="Schneider D."/>
            <person name="Tourret J."/>
            <person name="Vacherie B."/>
            <person name="Vallenet D."/>
            <person name="Medigue C."/>
            <person name="Rocha E.P.C."/>
            <person name="Denamur E."/>
        </authorList>
    </citation>
    <scope>NUCLEOTIDE SEQUENCE [LARGE SCALE GENOMIC DNA]</scope>
    <source>
        <strain>ATCC 35469 / DSM 13698 / BCRC 15582 / CCUG 18766 / IAM 14443 / JCM 21226 / LMG 7866 / NBRC 102419 / NCTC 12128 / CDC 0568-73</strain>
    </source>
</reference>
<evidence type="ECO:0000255" key="1">
    <source>
        <dbReference type="HAMAP-Rule" id="MF_00063"/>
    </source>
</evidence>
<sequence length="244" mass="27976">MSKLDLNALNELPKVDRILALAETNAELEKLDAEGRVAWALDNLPGEYVLSSSFGIQAAVSLHLVNQIRPDIPVILTDTGYLFPETYRFIDELTDKLKLNLKVYRATESAAWQEARYGKLWEQGVEGIEKYNDINKVEPMNRALKELNAQTWFAGLRREQSGSRANLPVLAIQRGVFKVLPIIDWDNRTIYQYLQKHGLKYHPLWDEGYLSVGDTHTTRKWEPGMAEEETRFFGLKRECGLHEG</sequence>
<keyword id="KW-0963">Cytoplasm</keyword>
<keyword id="KW-0560">Oxidoreductase</keyword>
<name>CYSH_ESCF3</name>
<accession>B7LWP0</accession>